<accession>B7MFQ4</accession>
<organism>
    <name type="scientific">Escherichia coli O45:K1 (strain S88 / ExPEC)</name>
    <dbReference type="NCBI Taxonomy" id="585035"/>
    <lineage>
        <taxon>Bacteria</taxon>
        <taxon>Pseudomonadati</taxon>
        <taxon>Pseudomonadota</taxon>
        <taxon>Gammaproteobacteria</taxon>
        <taxon>Enterobacterales</taxon>
        <taxon>Enterobacteriaceae</taxon>
        <taxon>Escherichia</taxon>
    </lineage>
</organism>
<sequence length="87" mass="9827">MKTKLNELLEFPTPFTYKVMGQALPELVDQVVEVVQRHAPGDYTPTVKPSSKGNYHSVSITINATHIEQVETLYEELGKIDIVRMVL</sequence>
<gene>
    <name evidence="1" type="primary">ybeD</name>
    <name type="ordered locus">ECS88_0672</name>
</gene>
<comment type="similarity">
    <text evidence="1">Belongs to the UPF0250 family.</text>
</comment>
<keyword id="KW-1185">Reference proteome</keyword>
<name>YBED_ECO45</name>
<protein>
    <recommendedName>
        <fullName evidence="1">UPF0250 protein YbeD</fullName>
    </recommendedName>
</protein>
<reference key="1">
    <citation type="journal article" date="2009" name="PLoS Genet.">
        <title>Organised genome dynamics in the Escherichia coli species results in highly diverse adaptive paths.</title>
        <authorList>
            <person name="Touchon M."/>
            <person name="Hoede C."/>
            <person name="Tenaillon O."/>
            <person name="Barbe V."/>
            <person name="Baeriswyl S."/>
            <person name="Bidet P."/>
            <person name="Bingen E."/>
            <person name="Bonacorsi S."/>
            <person name="Bouchier C."/>
            <person name="Bouvet O."/>
            <person name="Calteau A."/>
            <person name="Chiapello H."/>
            <person name="Clermont O."/>
            <person name="Cruveiller S."/>
            <person name="Danchin A."/>
            <person name="Diard M."/>
            <person name="Dossat C."/>
            <person name="Karoui M.E."/>
            <person name="Frapy E."/>
            <person name="Garry L."/>
            <person name="Ghigo J.M."/>
            <person name="Gilles A.M."/>
            <person name="Johnson J."/>
            <person name="Le Bouguenec C."/>
            <person name="Lescat M."/>
            <person name="Mangenot S."/>
            <person name="Martinez-Jehanne V."/>
            <person name="Matic I."/>
            <person name="Nassif X."/>
            <person name="Oztas S."/>
            <person name="Petit M.A."/>
            <person name="Pichon C."/>
            <person name="Rouy Z."/>
            <person name="Ruf C.S."/>
            <person name="Schneider D."/>
            <person name="Tourret J."/>
            <person name="Vacherie B."/>
            <person name="Vallenet D."/>
            <person name="Medigue C."/>
            <person name="Rocha E.P.C."/>
            <person name="Denamur E."/>
        </authorList>
    </citation>
    <scope>NUCLEOTIDE SEQUENCE [LARGE SCALE GENOMIC DNA]</scope>
    <source>
        <strain>S88 / ExPEC</strain>
    </source>
</reference>
<evidence type="ECO:0000255" key="1">
    <source>
        <dbReference type="HAMAP-Rule" id="MF_00659"/>
    </source>
</evidence>
<proteinExistence type="inferred from homology"/>
<feature type="chain" id="PRO_1000131239" description="UPF0250 protein YbeD">
    <location>
        <begin position="1"/>
        <end position="87"/>
    </location>
</feature>
<dbReference type="EMBL" id="CU928161">
    <property type="protein sequence ID" value="CAR02012.1"/>
    <property type="molecule type" value="Genomic_DNA"/>
</dbReference>
<dbReference type="RefSeq" id="WP_000850550.1">
    <property type="nucleotide sequence ID" value="NC_011742.1"/>
</dbReference>
<dbReference type="SMR" id="B7MFQ4"/>
<dbReference type="GeneID" id="93776851"/>
<dbReference type="KEGG" id="ecz:ECS88_0672"/>
<dbReference type="HOGENOM" id="CLU_161438_2_1_6"/>
<dbReference type="Proteomes" id="UP000000747">
    <property type="component" value="Chromosome"/>
</dbReference>
<dbReference type="GO" id="GO:0005829">
    <property type="term" value="C:cytosol"/>
    <property type="evidence" value="ECO:0007669"/>
    <property type="project" value="TreeGrafter"/>
</dbReference>
<dbReference type="FunFam" id="3.30.70.260:FF:000002">
    <property type="entry name" value="UPF0250 protein YbeD"/>
    <property type="match status" value="1"/>
</dbReference>
<dbReference type="Gene3D" id="3.30.70.260">
    <property type="match status" value="1"/>
</dbReference>
<dbReference type="HAMAP" id="MF_00659">
    <property type="entry name" value="UPF0250"/>
    <property type="match status" value="1"/>
</dbReference>
<dbReference type="InterPro" id="IPR007454">
    <property type="entry name" value="UPF0250_YbeD-like"/>
</dbReference>
<dbReference type="InterPro" id="IPR027471">
    <property type="entry name" value="YbeD-like_sf"/>
</dbReference>
<dbReference type="NCBIfam" id="NF003447">
    <property type="entry name" value="PRK04998.1"/>
    <property type="match status" value="1"/>
</dbReference>
<dbReference type="PANTHER" id="PTHR38036">
    <property type="entry name" value="UPF0250 PROTEIN YBED"/>
    <property type="match status" value="1"/>
</dbReference>
<dbReference type="PANTHER" id="PTHR38036:SF1">
    <property type="entry name" value="UPF0250 PROTEIN YBED"/>
    <property type="match status" value="1"/>
</dbReference>
<dbReference type="Pfam" id="PF04359">
    <property type="entry name" value="DUF493"/>
    <property type="match status" value="1"/>
</dbReference>
<dbReference type="SUPFAM" id="SSF117991">
    <property type="entry name" value="YbeD/HP0495-like"/>
    <property type="match status" value="1"/>
</dbReference>